<feature type="chain" id="PRO_1000051575" description="Glucose-1-phosphate adenylyltransferase">
    <location>
        <begin position="1"/>
        <end position="404"/>
    </location>
</feature>
<feature type="binding site" evidence="1">
    <location>
        <position position="99"/>
    </location>
    <ligand>
        <name>alpha-D-glucose 1-phosphate</name>
        <dbReference type="ChEBI" id="CHEBI:58601"/>
    </ligand>
</feature>
<feature type="binding site" evidence="1">
    <location>
        <position position="164"/>
    </location>
    <ligand>
        <name>alpha-D-glucose 1-phosphate</name>
        <dbReference type="ChEBI" id="CHEBI:58601"/>
    </ligand>
</feature>
<feature type="binding site" evidence="1">
    <location>
        <begin position="179"/>
        <end position="180"/>
    </location>
    <ligand>
        <name>alpha-D-glucose 1-phosphate</name>
        <dbReference type="ChEBI" id="CHEBI:58601"/>
    </ligand>
</feature>
<feature type="binding site" evidence="1">
    <location>
        <position position="197"/>
    </location>
    <ligand>
        <name>alpha-D-glucose 1-phosphate</name>
        <dbReference type="ChEBI" id="CHEBI:58601"/>
    </ligand>
</feature>
<keyword id="KW-0067">ATP-binding</keyword>
<keyword id="KW-0119">Carbohydrate metabolism</keyword>
<keyword id="KW-0320">Glycogen biosynthesis</keyword>
<keyword id="KW-0321">Glycogen metabolism</keyword>
<keyword id="KW-0547">Nucleotide-binding</keyword>
<keyword id="KW-0548">Nucleotidyltransferase</keyword>
<keyword id="KW-1185">Reference proteome</keyword>
<keyword id="KW-0808">Transferase</keyword>
<accession>A5U1R1</accession>
<comment type="function">
    <text evidence="1">Involved in the biosynthesis of ADP-glucose, a building block, required in the biosynthesis of maltose-1-phosphate (M1P) and in the elongation reactions to produce linear alpha-1,4-glucans. Catalyzes the reaction between ATP and alpha-D-glucose 1-phosphate (G1P) to produce pyrophosphate and ADP-Glc.</text>
</comment>
<comment type="catalytic activity">
    <reaction evidence="1">
        <text>alpha-D-glucose 1-phosphate + ATP + H(+) = ADP-alpha-D-glucose + diphosphate</text>
        <dbReference type="Rhea" id="RHEA:12120"/>
        <dbReference type="ChEBI" id="CHEBI:15378"/>
        <dbReference type="ChEBI" id="CHEBI:30616"/>
        <dbReference type="ChEBI" id="CHEBI:33019"/>
        <dbReference type="ChEBI" id="CHEBI:57498"/>
        <dbReference type="ChEBI" id="CHEBI:58601"/>
        <dbReference type="EC" id="2.7.7.27"/>
    </reaction>
</comment>
<comment type="pathway">
    <text evidence="2">Capsule biogenesis; capsule polysaccharide biosynthesis.</text>
</comment>
<comment type="pathway">
    <text evidence="1">Glycan biosynthesis; glycogen biosynthesis.</text>
</comment>
<comment type="similarity">
    <text evidence="1">Belongs to the bacterial/plant glucose-1-phosphate adenylyltransferase family.</text>
</comment>
<organism>
    <name type="scientific">Mycobacterium tuberculosis (strain ATCC 25177 / H37Ra)</name>
    <dbReference type="NCBI Taxonomy" id="419947"/>
    <lineage>
        <taxon>Bacteria</taxon>
        <taxon>Bacillati</taxon>
        <taxon>Actinomycetota</taxon>
        <taxon>Actinomycetes</taxon>
        <taxon>Mycobacteriales</taxon>
        <taxon>Mycobacteriaceae</taxon>
        <taxon>Mycobacterium</taxon>
        <taxon>Mycobacterium tuberculosis complex</taxon>
    </lineage>
</organism>
<proteinExistence type="inferred from homology"/>
<evidence type="ECO:0000255" key="1">
    <source>
        <dbReference type="HAMAP-Rule" id="MF_00624"/>
    </source>
</evidence>
<evidence type="ECO:0000305" key="2"/>
<dbReference type="EC" id="2.7.7.27" evidence="1"/>
<dbReference type="EMBL" id="CP000611">
    <property type="protein sequence ID" value="ABQ72961.1"/>
    <property type="molecule type" value="Genomic_DNA"/>
</dbReference>
<dbReference type="RefSeq" id="WP_003406249.1">
    <property type="nucleotide sequence ID" value="NZ_CP016972.1"/>
</dbReference>
<dbReference type="SMR" id="A5U1R1"/>
<dbReference type="GeneID" id="45425183"/>
<dbReference type="KEGG" id="mra:MRA_1222"/>
<dbReference type="eggNOG" id="COG0448">
    <property type="taxonomic scope" value="Bacteria"/>
</dbReference>
<dbReference type="HOGENOM" id="CLU_029499_14_1_11"/>
<dbReference type="UniPathway" id="UPA00164"/>
<dbReference type="UniPathway" id="UPA00934"/>
<dbReference type="Proteomes" id="UP000001988">
    <property type="component" value="Chromosome"/>
</dbReference>
<dbReference type="GO" id="GO:0005524">
    <property type="term" value="F:ATP binding"/>
    <property type="evidence" value="ECO:0007669"/>
    <property type="project" value="UniProtKB-KW"/>
</dbReference>
<dbReference type="GO" id="GO:0008878">
    <property type="term" value="F:glucose-1-phosphate adenylyltransferase activity"/>
    <property type="evidence" value="ECO:0007669"/>
    <property type="project" value="UniProtKB-UniRule"/>
</dbReference>
<dbReference type="GO" id="GO:0045227">
    <property type="term" value="P:capsule polysaccharide biosynthetic process"/>
    <property type="evidence" value="ECO:0007669"/>
    <property type="project" value="UniProtKB-UniPathway"/>
</dbReference>
<dbReference type="GO" id="GO:0005978">
    <property type="term" value="P:glycogen biosynthetic process"/>
    <property type="evidence" value="ECO:0007669"/>
    <property type="project" value="UniProtKB-UniRule"/>
</dbReference>
<dbReference type="CDD" id="cd02508">
    <property type="entry name" value="ADP_Glucose_PP"/>
    <property type="match status" value="1"/>
</dbReference>
<dbReference type="CDD" id="cd04651">
    <property type="entry name" value="LbH_G1P_AT_C"/>
    <property type="match status" value="1"/>
</dbReference>
<dbReference type="FunFam" id="2.160.10.10:FF:000020">
    <property type="entry name" value="Glucose-1-phosphate adenylyltransferase"/>
    <property type="match status" value="1"/>
</dbReference>
<dbReference type="FunFam" id="3.90.550.10:FF:000014">
    <property type="entry name" value="Glucose-1-phosphate adenylyltransferase"/>
    <property type="match status" value="1"/>
</dbReference>
<dbReference type="Gene3D" id="2.160.10.10">
    <property type="entry name" value="Hexapeptide repeat proteins"/>
    <property type="match status" value="1"/>
</dbReference>
<dbReference type="Gene3D" id="3.90.550.10">
    <property type="entry name" value="Spore Coat Polysaccharide Biosynthesis Protein SpsA, Chain A"/>
    <property type="match status" value="1"/>
</dbReference>
<dbReference type="HAMAP" id="MF_00624">
    <property type="entry name" value="GlgC"/>
    <property type="match status" value="1"/>
</dbReference>
<dbReference type="InterPro" id="IPR011831">
    <property type="entry name" value="ADP-Glc_PPase"/>
</dbReference>
<dbReference type="InterPro" id="IPR005836">
    <property type="entry name" value="ADP_Glu_pyroP_CS"/>
</dbReference>
<dbReference type="InterPro" id="IPR023049">
    <property type="entry name" value="GlgC_bac"/>
</dbReference>
<dbReference type="InterPro" id="IPR056818">
    <property type="entry name" value="GlmU/GlgC-like_hexapep"/>
</dbReference>
<dbReference type="InterPro" id="IPR005835">
    <property type="entry name" value="NTP_transferase_dom"/>
</dbReference>
<dbReference type="InterPro" id="IPR029044">
    <property type="entry name" value="Nucleotide-diphossugar_trans"/>
</dbReference>
<dbReference type="InterPro" id="IPR011004">
    <property type="entry name" value="Trimer_LpxA-like_sf"/>
</dbReference>
<dbReference type="NCBIfam" id="TIGR02091">
    <property type="entry name" value="glgC"/>
    <property type="match status" value="1"/>
</dbReference>
<dbReference type="NCBIfam" id="NF001947">
    <property type="entry name" value="PRK00725.1"/>
    <property type="match status" value="1"/>
</dbReference>
<dbReference type="NCBIfam" id="NF002023">
    <property type="entry name" value="PRK00844.1"/>
    <property type="match status" value="1"/>
</dbReference>
<dbReference type="PANTHER" id="PTHR43523:SF2">
    <property type="entry name" value="GLUCOSE-1-PHOSPHATE ADENYLYLTRANSFERASE"/>
    <property type="match status" value="1"/>
</dbReference>
<dbReference type="PANTHER" id="PTHR43523">
    <property type="entry name" value="GLUCOSE-1-PHOSPHATE ADENYLYLTRANSFERASE-RELATED"/>
    <property type="match status" value="1"/>
</dbReference>
<dbReference type="Pfam" id="PF24894">
    <property type="entry name" value="Hexapep_GlmU"/>
    <property type="match status" value="1"/>
</dbReference>
<dbReference type="Pfam" id="PF00483">
    <property type="entry name" value="NTP_transferase"/>
    <property type="match status" value="1"/>
</dbReference>
<dbReference type="SUPFAM" id="SSF53448">
    <property type="entry name" value="Nucleotide-diphospho-sugar transferases"/>
    <property type="match status" value="1"/>
</dbReference>
<dbReference type="SUPFAM" id="SSF51161">
    <property type="entry name" value="Trimeric LpxA-like enzymes"/>
    <property type="match status" value="1"/>
</dbReference>
<dbReference type="PROSITE" id="PS00808">
    <property type="entry name" value="ADP_GLC_PYROPHOSPH_1"/>
    <property type="match status" value="1"/>
</dbReference>
<dbReference type="PROSITE" id="PS00809">
    <property type="entry name" value="ADP_GLC_PYROPHOSPH_2"/>
    <property type="match status" value="1"/>
</dbReference>
<dbReference type="PROSITE" id="PS00810">
    <property type="entry name" value="ADP_GLC_PYROPHOSPH_3"/>
    <property type="match status" value="1"/>
</dbReference>
<gene>
    <name evidence="1" type="primary">glgC</name>
    <name type="ordered locus">MRA_1222</name>
</gene>
<protein>
    <recommendedName>
        <fullName evidence="1">Glucose-1-phosphate adenylyltransferase</fullName>
        <ecNumber evidence="1">2.7.7.27</ecNumber>
    </recommendedName>
    <alternativeName>
        <fullName evidence="1">ADP-glucose pyrophosphorylase</fullName>
        <shortName evidence="1">ADPGlc PPase</shortName>
    </alternativeName>
    <alternativeName>
        <fullName evidence="1">ADP-glucose synthase</fullName>
    </alternativeName>
</protein>
<sequence>MREVPHVLGIVLAGGEGKRLYPLTADRAKPAVPFGGAYRLIDFVLSNLVNARYLRICVLTQYKSHSLDRHISQNWRLSGLAGEYITPVPAQQRLGPRWYTGSADAIYQSLNLIYDEDPDYIVVFGADHVYRMDPEQMVRFHIDSGAGATVAGIRVPRENATAFGCIDADDSGRIRSFVEKPLEPPGTPDDPDTTFVSMGNYIFTTKVLIDAIRADADDDHSDHDMGGDIVPRLVADGMAAVYDFSDNEVPGATDRDRAYWRDVGTLDAFYDAHMDLVSVHPVFNLYNKRWPIRGESENLAPAKFVNGGSAQESVVGAGSIISAASVRNSVLSSNVVVDDGAIVEGSVIMPGTRVGRGAVVRHAILDKNVVVGPGEMVGVDLEKDRERFAISAGGVVAVGKGVWI</sequence>
<name>GLGC_MYCTA</name>
<reference key="1">
    <citation type="journal article" date="2008" name="PLoS ONE">
        <title>Genetic basis of virulence attenuation revealed by comparative genomic analysis of Mycobacterium tuberculosis strain H37Ra versus H37Rv.</title>
        <authorList>
            <person name="Zheng H."/>
            <person name="Lu L."/>
            <person name="Wang B."/>
            <person name="Pu S."/>
            <person name="Zhang X."/>
            <person name="Zhu G."/>
            <person name="Shi W."/>
            <person name="Zhang L."/>
            <person name="Wang H."/>
            <person name="Wang S."/>
            <person name="Zhao G."/>
            <person name="Zhang Y."/>
        </authorList>
    </citation>
    <scope>NUCLEOTIDE SEQUENCE [LARGE SCALE GENOMIC DNA]</scope>
    <source>
        <strain>ATCC 25177 / H37Ra</strain>
    </source>
</reference>